<feature type="chain" id="PRO_0000076094" description="Rho GTPase-activating protein 39">
    <location>
        <begin position="1" status="less than"/>
        <end position="101"/>
    </location>
</feature>
<feature type="domain" description="Rho-GAP" evidence="1">
    <location>
        <begin position="1" status="less than"/>
        <end position="96"/>
    </location>
</feature>
<feature type="site" description="Arginine finger; crucial for GTP hydrolysis by stabilizing the transition state" evidence="1">
    <location>
        <position position="1"/>
    </location>
</feature>
<feature type="non-terminal residue">
    <location>
        <position position="1"/>
    </location>
</feature>
<sequence>YEQCIAHYESPEAAVAVVHALPRINRMVLCYLIRFLQVFVQPANVAITKMDVSNLAMVMAPNCLRCQSDDPRVIFENTRKEMSFLRVLIQHLDTSFMEGVL</sequence>
<comment type="tissue specificity">
    <text>Preoptic area and testis.</text>
</comment>
<comment type="caution">
    <text evidence="3">Was originally thought to be a precursor for a secreted GNRH-like peptide.</text>
</comment>
<comment type="sequence caution" evidence="2">
    <conflict type="frameshift">
        <sequence resource="EMBL-CDS" id="CAA37324"/>
    </conflict>
</comment>
<name>RHG39_RAT</name>
<gene>
    <name type="primary">Arhgap39</name>
</gene>
<organism>
    <name type="scientific">Rattus norvegicus</name>
    <name type="common">Rat</name>
    <dbReference type="NCBI Taxonomy" id="10116"/>
    <lineage>
        <taxon>Eukaryota</taxon>
        <taxon>Metazoa</taxon>
        <taxon>Chordata</taxon>
        <taxon>Craniata</taxon>
        <taxon>Vertebrata</taxon>
        <taxon>Euteleostomi</taxon>
        <taxon>Mammalia</taxon>
        <taxon>Eutheria</taxon>
        <taxon>Euarchontoglires</taxon>
        <taxon>Glires</taxon>
        <taxon>Rodentia</taxon>
        <taxon>Myomorpha</taxon>
        <taxon>Muroidea</taxon>
        <taxon>Muridae</taxon>
        <taxon>Murinae</taxon>
        <taxon>Rattus</taxon>
    </lineage>
</organism>
<dbReference type="EMBL" id="X53232">
    <property type="protein sequence ID" value="CAA37324.1"/>
    <property type="status" value="ALT_FRAME"/>
    <property type="molecule type" value="mRNA"/>
</dbReference>
<dbReference type="SMR" id="P18890"/>
<dbReference type="FunCoup" id="P18890">
    <property type="interactions" value="133"/>
</dbReference>
<dbReference type="STRING" id="10116.ENSRNOP00000051450"/>
<dbReference type="PaxDb" id="10116-ENSRNOP00000051450"/>
<dbReference type="UCSC" id="RGD:1593158">
    <property type="organism name" value="rat"/>
</dbReference>
<dbReference type="AGR" id="RGD:1593158"/>
<dbReference type="RGD" id="1593158">
    <property type="gene designation" value="Arhgap39"/>
</dbReference>
<dbReference type="eggNOG" id="ENOG502QR6X">
    <property type="taxonomic scope" value="Eukaryota"/>
</dbReference>
<dbReference type="InParanoid" id="P18890"/>
<dbReference type="PhylomeDB" id="P18890"/>
<dbReference type="Proteomes" id="UP000002494">
    <property type="component" value="Unplaced"/>
</dbReference>
<dbReference type="GO" id="GO:0098978">
    <property type="term" value="C:glutamatergic synapse"/>
    <property type="evidence" value="ECO:0000314"/>
    <property type="project" value="SynGO"/>
</dbReference>
<dbReference type="GO" id="GO:0098794">
    <property type="term" value="C:postsynapse"/>
    <property type="evidence" value="ECO:0000314"/>
    <property type="project" value="SynGO"/>
</dbReference>
<dbReference type="GO" id="GO:0099173">
    <property type="term" value="P:postsynapse organization"/>
    <property type="evidence" value="ECO:0000266"/>
    <property type="project" value="RGD"/>
</dbReference>
<dbReference type="GO" id="GO:0007165">
    <property type="term" value="P:signal transduction"/>
    <property type="evidence" value="ECO:0007669"/>
    <property type="project" value="InterPro"/>
</dbReference>
<dbReference type="FunFam" id="1.10.555.10:FF:000128">
    <property type="entry name" value="Rho GTPase-activating protein 39"/>
    <property type="match status" value="1"/>
</dbReference>
<dbReference type="Gene3D" id="1.10.555.10">
    <property type="entry name" value="Rho GTPase activation protein"/>
    <property type="match status" value="1"/>
</dbReference>
<dbReference type="InterPro" id="IPR008936">
    <property type="entry name" value="Rho_GTPase_activation_prot"/>
</dbReference>
<dbReference type="InterPro" id="IPR000198">
    <property type="entry name" value="RhoGAP_dom"/>
</dbReference>
<dbReference type="PANTHER" id="PTHR45876">
    <property type="entry name" value="FI04035P"/>
    <property type="match status" value="1"/>
</dbReference>
<dbReference type="PANTHER" id="PTHR45876:SF1">
    <property type="entry name" value="RHO GTPASE-ACTIVATING PROTEIN 39"/>
    <property type="match status" value="1"/>
</dbReference>
<dbReference type="Pfam" id="PF00620">
    <property type="entry name" value="RhoGAP"/>
    <property type="match status" value="1"/>
</dbReference>
<dbReference type="SUPFAM" id="SSF48350">
    <property type="entry name" value="GTPase activation domain, GAP"/>
    <property type="match status" value="1"/>
</dbReference>
<dbReference type="PROSITE" id="PS50238">
    <property type="entry name" value="RHOGAP"/>
    <property type="match status" value="1"/>
</dbReference>
<accession>P18890</accession>
<keyword id="KW-1185">Reference proteome</keyword>
<reference key="1">
    <citation type="journal article" date="1990" name="Mol. Endocrinol.">
        <title>Cloning of two hypothalamic cDNAs encoding tissue-specific transcripts in the preoptic area and testis.</title>
        <authorList>
            <person name="Nowak F.V."/>
        </authorList>
    </citation>
    <scope>NUCLEOTIDE SEQUENCE [MRNA]</scope>
    <source>
        <tissue>Hypothalamus</tissue>
    </source>
</reference>
<proteinExistence type="evidence at transcript level"/>
<evidence type="ECO:0000255" key="1">
    <source>
        <dbReference type="PROSITE-ProRule" id="PRU00172"/>
    </source>
</evidence>
<evidence type="ECO:0000305" key="2"/>
<evidence type="ECO:0000305" key="3">
    <source>
    </source>
</evidence>
<protein>
    <recommendedName>
        <fullName>Rho GTPase-activating protein 39</fullName>
    </recommendedName>
    <alternativeName>
        <fullName>Preoptic regulatory factor 2</fullName>
        <shortName>PORF-2</shortName>
    </alternativeName>
</protein>